<sequence length="187" mass="21033">MFDLPKIEKAVKMILEAIGEDPNREGLEETPARVARMYQEIFAGLGEDPEEHLGKTFSEEHEEMVIVKDIRLFSMCEHHLIPFIGKAHVCYIPRNGNVTGLSKLARLVNGYARRPQLQERLTKQIADAIMKRLNPYGVVVVVEAEHLCMSMRGVRSPGARTVTSAVRGIFKKNEASRAEAMSLIMKS</sequence>
<accession>A4J5D0</accession>
<gene>
    <name evidence="1" type="primary">folE</name>
    <name type="ordered locus">Dred_1758</name>
</gene>
<comment type="catalytic activity">
    <reaction evidence="1">
        <text>GTP + H2O = 7,8-dihydroneopterin 3'-triphosphate + formate + H(+)</text>
        <dbReference type="Rhea" id="RHEA:17473"/>
        <dbReference type="ChEBI" id="CHEBI:15377"/>
        <dbReference type="ChEBI" id="CHEBI:15378"/>
        <dbReference type="ChEBI" id="CHEBI:15740"/>
        <dbReference type="ChEBI" id="CHEBI:37565"/>
        <dbReference type="ChEBI" id="CHEBI:58462"/>
        <dbReference type="EC" id="3.5.4.16"/>
    </reaction>
</comment>
<comment type="pathway">
    <text evidence="1">Cofactor biosynthesis; 7,8-dihydroneopterin triphosphate biosynthesis; 7,8-dihydroneopterin triphosphate from GTP: step 1/1.</text>
</comment>
<comment type="subunit">
    <text evidence="1">Homomer.</text>
</comment>
<comment type="similarity">
    <text evidence="1">Belongs to the GTP cyclohydrolase I family.</text>
</comment>
<dbReference type="EC" id="3.5.4.16" evidence="1"/>
<dbReference type="EMBL" id="CP000612">
    <property type="protein sequence ID" value="ABO50283.1"/>
    <property type="molecule type" value="Genomic_DNA"/>
</dbReference>
<dbReference type="RefSeq" id="WP_011878097.1">
    <property type="nucleotide sequence ID" value="NC_009253.1"/>
</dbReference>
<dbReference type="SMR" id="A4J5D0"/>
<dbReference type="STRING" id="349161.Dred_1758"/>
<dbReference type="KEGG" id="drm:Dred_1758"/>
<dbReference type="eggNOG" id="COG0302">
    <property type="taxonomic scope" value="Bacteria"/>
</dbReference>
<dbReference type="HOGENOM" id="CLU_049768_3_3_9"/>
<dbReference type="OrthoDB" id="9801207at2"/>
<dbReference type="UniPathway" id="UPA00848">
    <property type="reaction ID" value="UER00151"/>
</dbReference>
<dbReference type="Proteomes" id="UP000001556">
    <property type="component" value="Chromosome"/>
</dbReference>
<dbReference type="GO" id="GO:0005737">
    <property type="term" value="C:cytoplasm"/>
    <property type="evidence" value="ECO:0007669"/>
    <property type="project" value="TreeGrafter"/>
</dbReference>
<dbReference type="GO" id="GO:0005525">
    <property type="term" value="F:GTP binding"/>
    <property type="evidence" value="ECO:0007669"/>
    <property type="project" value="UniProtKB-KW"/>
</dbReference>
<dbReference type="GO" id="GO:0003934">
    <property type="term" value="F:GTP cyclohydrolase I activity"/>
    <property type="evidence" value="ECO:0007669"/>
    <property type="project" value="UniProtKB-UniRule"/>
</dbReference>
<dbReference type="GO" id="GO:0008270">
    <property type="term" value="F:zinc ion binding"/>
    <property type="evidence" value="ECO:0007669"/>
    <property type="project" value="UniProtKB-UniRule"/>
</dbReference>
<dbReference type="GO" id="GO:0006730">
    <property type="term" value="P:one-carbon metabolic process"/>
    <property type="evidence" value="ECO:0007669"/>
    <property type="project" value="UniProtKB-UniRule"/>
</dbReference>
<dbReference type="GO" id="GO:0006729">
    <property type="term" value="P:tetrahydrobiopterin biosynthetic process"/>
    <property type="evidence" value="ECO:0007669"/>
    <property type="project" value="TreeGrafter"/>
</dbReference>
<dbReference type="GO" id="GO:0046654">
    <property type="term" value="P:tetrahydrofolate biosynthetic process"/>
    <property type="evidence" value="ECO:0007669"/>
    <property type="project" value="UniProtKB-UniRule"/>
</dbReference>
<dbReference type="CDD" id="cd00642">
    <property type="entry name" value="GTP_cyclohydro1"/>
    <property type="match status" value="1"/>
</dbReference>
<dbReference type="FunFam" id="1.10.286.10:FF:000001">
    <property type="entry name" value="GTP cyclohydrolase 1"/>
    <property type="match status" value="1"/>
</dbReference>
<dbReference type="FunFam" id="3.30.1130.10:FF:000001">
    <property type="entry name" value="GTP cyclohydrolase 1"/>
    <property type="match status" value="1"/>
</dbReference>
<dbReference type="Gene3D" id="1.10.286.10">
    <property type="match status" value="1"/>
</dbReference>
<dbReference type="Gene3D" id="3.30.1130.10">
    <property type="match status" value="1"/>
</dbReference>
<dbReference type="HAMAP" id="MF_00223">
    <property type="entry name" value="FolE"/>
    <property type="match status" value="1"/>
</dbReference>
<dbReference type="InterPro" id="IPR043133">
    <property type="entry name" value="GTP-CH-I_C/QueF"/>
</dbReference>
<dbReference type="InterPro" id="IPR043134">
    <property type="entry name" value="GTP-CH-I_N"/>
</dbReference>
<dbReference type="InterPro" id="IPR001474">
    <property type="entry name" value="GTP_CycHdrlase_I"/>
</dbReference>
<dbReference type="InterPro" id="IPR018234">
    <property type="entry name" value="GTP_CycHdrlase_I_CS"/>
</dbReference>
<dbReference type="InterPro" id="IPR020602">
    <property type="entry name" value="GTP_CycHdrlase_I_dom"/>
</dbReference>
<dbReference type="NCBIfam" id="TIGR00063">
    <property type="entry name" value="folE"/>
    <property type="match status" value="1"/>
</dbReference>
<dbReference type="NCBIfam" id="NF006825">
    <property type="entry name" value="PRK09347.1-2"/>
    <property type="match status" value="1"/>
</dbReference>
<dbReference type="NCBIfam" id="NF006826">
    <property type="entry name" value="PRK09347.1-3"/>
    <property type="match status" value="1"/>
</dbReference>
<dbReference type="PANTHER" id="PTHR11109:SF7">
    <property type="entry name" value="GTP CYCLOHYDROLASE 1"/>
    <property type="match status" value="1"/>
</dbReference>
<dbReference type="PANTHER" id="PTHR11109">
    <property type="entry name" value="GTP CYCLOHYDROLASE I"/>
    <property type="match status" value="1"/>
</dbReference>
<dbReference type="Pfam" id="PF01227">
    <property type="entry name" value="GTP_cyclohydroI"/>
    <property type="match status" value="1"/>
</dbReference>
<dbReference type="SUPFAM" id="SSF55620">
    <property type="entry name" value="Tetrahydrobiopterin biosynthesis enzymes-like"/>
    <property type="match status" value="1"/>
</dbReference>
<dbReference type="PROSITE" id="PS00859">
    <property type="entry name" value="GTP_CYCLOHYDROL_1_1"/>
    <property type="match status" value="1"/>
</dbReference>
<dbReference type="PROSITE" id="PS00860">
    <property type="entry name" value="GTP_CYCLOHYDROL_1_2"/>
    <property type="match status" value="1"/>
</dbReference>
<organism>
    <name type="scientific">Desulforamulus reducens (strain ATCC BAA-1160 / DSM 100696 / MI-1)</name>
    <name type="common">Desulfotomaculum reducens</name>
    <dbReference type="NCBI Taxonomy" id="349161"/>
    <lineage>
        <taxon>Bacteria</taxon>
        <taxon>Bacillati</taxon>
        <taxon>Bacillota</taxon>
        <taxon>Clostridia</taxon>
        <taxon>Eubacteriales</taxon>
        <taxon>Peptococcaceae</taxon>
        <taxon>Desulforamulus</taxon>
    </lineage>
</organism>
<protein>
    <recommendedName>
        <fullName evidence="1">GTP cyclohydrolase 1</fullName>
        <ecNumber evidence="1">3.5.4.16</ecNumber>
    </recommendedName>
    <alternativeName>
        <fullName evidence="1">GTP cyclohydrolase I</fullName>
        <shortName evidence="1">GTP-CH-I</shortName>
    </alternativeName>
</protein>
<evidence type="ECO:0000255" key="1">
    <source>
        <dbReference type="HAMAP-Rule" id="MF_00223"/>
    </source>
</evidence>
<feature type="chain" id="PRO_1000071762" description="GTP cyclohydrolase 1">
    <location>
        <begin position="1"/>
        <end position="187"/>
    </location>
</feature>
<feature type="binding site" evidence="1">
    <location>
        <position position="76"/>
    </location>
    <ligand>
        <name>Zn(2+)</name>
        <dbReference type="ChEBI" id="CHEBI:29105"/>
    </ligand>
</feature>
<feature type="binding site" evidence="1">
    <location>
        <position position="79"/>
    </location>
    <ligand>
        <name>Zn(2+)</name>
        <dbReference type="ChEBI" id="CHEBI:29105"/>
    </ligand>
</feature>
<feature type="binding site" evidence="1">
    <location>
        <position position="148"/>
    </location>
    <ligand>
        <name>Zn(2+)</name>
        <dbReference type="ChEBI" id="CHEBI:29105"/>
    </ligand>
</feature>
<keyword id="KW-0342">GTP-binding</keyword>
<keyword id="KW-0378">Hydrolase</keyword>
<keyword id="KW-0479">Metal-binding</keyword>
<keyword id="KW-0547">Nucleotide-binding</keyword>
<keyword id="KW-0554">One-carbon metabolism</keyword>
<keyword id="KW-1185">Reference proteome</keyword>
<keyword id="KW-0862">Zinc</keyword>
<proteinExistence type="inferred from homology"/>
<name>GCH1_DESRM</name>
<reference key="1">
    <citation type="submission" date="2007-03" db="EMBL/GenBank/DDBJ databases">
        <title>Complete sequence of Desulfotomaculum reducens MI-1.</title>
        <authorList>
            <consortium name="US DOE Joint Genome Institute"/>
            <person name="Copeland A."/>
            <person name="Lucas S."/>
            <person name="Lapidus A."/>
            <person name="Barry K."/>
            <person name="Detter J.C."/>
            <person name="Glavina del Rio T."/>
            <person name="Hammon N."/>
            <person name="Israni S."/>
            <person name="Dalin E."/>
            <person name="Tice H."/>
            <person name="Pitluck S."/>
            <person name="Sims D."/>
            <person name="Brettin T."/>
            <person name="Bruce D."/>
            <person name="Han C."/>
            <person name="Tapia R."/>
            <person name="Schmutz J."/>
            <person name="Larimer F."/>
            <person name="Land M."/>
            <person name="Hauser L."/>
            <person name="Kyrpides N."/>
            <person name="Kim E."/>
            <person name="Tebo B.M."/>
            <person name="Richardson P."/>
        </authorList>
    </citation>
    <scope>NUCLEOTIDE SEQUENCE [LARGE SCALE GENOMIC DNA]</scope>
    <source>
        <strain>ATCC BAA-1160 / DSM 100696 / MI-1</strain>
    </source>
</reference>